<feature type="initiator methionine" description="Removed" evidence="1">
    <location>
        <position position="1"/>
    </location>
</feature>
<feature type="chain" id="PRO_0000185222" description="Keratin-associated protein 6-1">
    <location>
        <begin position="2"/>
        <end position="80"/>
    </location>
</feature>
<protein>
    <recommendedName>
        <fullName>Keratin-associated protein 6-1</fullName>
    </recommendedName>
    <alternativeName>
        <fullName>Keratin, glycine/tyrosine-rich of hair</fullName>
    </alternativeName>
</protein>
<organism>
    <name type="scientific">Oryctolagus cuniculus</name>
    <name type="common">Rabbit</name>
    <dbReference type="NCBI Taxonomy" id="9986"/>
    <lineage>
        <taxon>Eukaryota</taxon>
        <taxon>Metazoa</taxon>
        <taxon>Chordata</taxon>
        <taxon>Craniata</taxon>
        <taxon>Vertebrata</taxon>
        <taxon>Euteleostomi</taxon>
        <taxon>Mammalia</taxon>
        <taxon>Eutheria</taxon>
        <taxon>Euarchontoglires</taxon>
        <taxon>Glires</taxon>
        <taxon>Lagomorpha</taxon>
        <taxon>Leporidae</taxon>
        <taxon>Oryctolagus</taxon>
    </lineage>
</organism>
<accession>Q02957</accession>
<name>KRA61_RABIT</name>
<dbReference type="EMBL" id="M95718">
    <property type="protein sequence ID" value="AAA31379.1"/>
    <property type="molecule type" value="Genomic_DNA"/>
</dbReference>
<dbReference type="PIR" id="B45466">
    <property type="entry name" value="B45466"/>
</dbReference>
<dbReference type="RefSeq" id="NP_001164738.1">
    <property type="nucleotide sequence ID" value="NM_001171267.1"/>
</dbReference>
<dbReference type="FunCoup" id="Q02957">
    <property type="interactions" value="11"/>
</dbReference>
<dbReference type="PaxDb" id="9986-ENSOCUP00000011883"/>
<dbReference type="GeneID" id="100328943"/>
<dbReference type="KEGG" id="ocu:100328943"/>
<dbReference type="CTD" id="337966"/>
<dbReference type="InParanoid" id="Q02957"/>
<dbReference type="Proteomes" id="UP000001811">
    <property type="component" value="Unplaced"/>
</dbReference>
<dbReference type="GO" id="GO:0005882">
    <property type="term" value="C:intermediate filament"/>
    <property type="evidence" value="ECO:0007669"/>
    <property type="project" value="UniProtKB-KW"/>
</dbReference>
<dbReference type="GO" id="GO:0031424">
    <property type="term" value="P:keratinization"/>
    <property type="evidence" value="ECO:0007669"/>
    <property type="project" value="InterPro"/>
</dbReference>
<dbReference type="InterPro" id="IPR040313">
    <property type="entry name" value="KAP6"/>
</dbReference>
<dbReference type="PANTHER" id="PTHR31678:SF2">
    <property type="entry name" value="KERATIN-ASSOCIATED PROTEIN 6-1"/>
    <property type="match status" value="1"/>
</dbReference>
<dbReference type="PANTHER" id="PTHR31678">
    <property type="entry name" value="KERATIN-ASSOCIATED PROTEIN 6-3"/>
    <property type="match status" value="1"/>
</dbReference>
<proteinExistence type="evidence at transcript level"/>
<comment type="function">
    <text>In the hair cortex, hair keratin intermediate filaments are embedded in an interfilamentous matrix, consisting of hair keratin-associated proteins (KRTAP), which are essential for the formation of a rigid and resistant hair shaft through their extensive disulfide bond cross-linking with abundant cysteine residues of hair keratins. The matrix proteins include the high-sulfur and high-glycine-tyrosine keratins.</text>
</comment>
<comment type="subunit">
    <text>Interacts with hair keratins.</text>
</comment>
<comment type="developmental stage">
    <text>KAP6 proteins are first expressed in differentiating hair shaft keratinocytes a considerable distance above the proliferative zone of the follicle bulb.</text>
</comment>
<comment type="similarity">
    <text evidence="1">Belongs to the KRTAP type 6 family.</text>
</comment>
<keyword id="KW-0416">Keratin</keyword>
<keyword id="KW-1185">Reference proteome</keyword>
<evidence type="ECO:0000305" key="1"/>
<sequence length="80" mass="8274">MCGYYGNYYGGRGYGCCGYGGLGYGYGGLGCGLGSYYGCGYRRLGCGYGCGYGYGYGSRSLCGCGYGYGSGYGSGFGYYY</sequence>
<reference key="1">
    <citation type="journal article" date="1993" name="J. Biol. Chem.">
        <title>Sequence, expression, and evolutionary conservation of a gene encoding a glycine/tyrosine-rich keratin-associated protein of hair.</title>
        <authorList>
            <person name="Fratini A."/>
            <person name="Powell B.C."/>
            <person name="Rogers G.E."/>
        </authorList>
    </citation>
    <scope>NUCLEOTIDE SEQUENCE [GENOMIC DNA]</scope>
    <source>
        <tissue>Liver</tissue>
    </source>
</reference>
<gene>
    <name type="primary">KRTAP6-1</name>
    <name type="synonym">KAP6-1</name>
</gene>